<feature type="chain" id="PRO_0000295644" description="Protein-disulfide oxidoreductase DsbI">
    <location>
        <begin position="1"/>
        <end position="223"/>
    </location>
</feature>
<feature type="transmembrane region" description="Helical" evidence="1">
    <location>
        <begin position="26"/>
        <end position="46"/>
    </location>
</feature>
<feature type="transmembrane region" description="Helical" evidence="1">
    <location>
        <begin position="59"/>
        <end position="78"/>
    </location>
</feature>
<feature type="transmembrane region" description="Helical" evidence="1">
    <location>
        <begin position="82"/>
        <end position="102"/>
    </location>
</feature>
<feature type="transmembrane region" description="Helical" evidence="1">
    <location>
        <begin position="198"/>
        <end position="218"/>
    </location>
</feature>
<feature type="disulfide bond" description="Redox-active" evidence="1">
    <location>
        <begin position="55"/>
        <end position="58"/>
    </location>
</feature>
<feature type="disulfide bond" description="Redox-active" evidence="1">
    <location>
        <begin position="127"/>
        <end position="153"/>
    </location>
</feature>
<sequence length="223" mass="25117">MGIKGMWKDLRTSPVDTLVRWQEQRLLWLLMAVAMGALIILAHSFFQIYLYMAPCEQCVYIRYAMFVMVIGGLVAAINPKNIILKLIGCVMAFYGSILGLKFSLKLNDIHHAVHNPDPDSLFGVQGCSTDPTFPFNLPLAQWAPNWFKPTGDCGYDAPIVPDGVTLSSTQQWFVEMYQQSEGWYLLPPWHFMNMAQACMLAFGMCLVLLVIMSGAWALKIIRG</sequence>
<proteinExistence type="inferred from homology"/>
<protein>
    <recommendedName>
        <fullName evidence="1">Protein-disulfide oxidoreductase DsbI</fullName>
    </recommendedName>
</protein>
<gene>
    <name evidence="1" type="primary">dsbI</name>
    <name type="ordered locus">ECP_3132</name>
</gene>
<dbReference type="EMBL" id="CP000247">
    <property type="protein sequence ID" value="ABG71115.1"/>
    <property type="status" value="ALT_INIT"/>
    <property type="molecule type" value="Genomic_DNA"/>
</dbReference>
<dbReference type="RefSeq" id="WP_000511506.1">
    <property type="nucleotide sequence ID" value="NC_008253.1"/>
</dbReference>
<dbReference type="KEGG" id="ecp:ECP_3132"/>
<dbReference type="HOGENOM" id="CLU_090583_1_0_6"/>
<dbReference type="Proteomes" id="UP000009182">
    <property type="component" value="Chromosome"/>
</dbReference>
<dbReference type="GO" id="GO:0005886">
    <property type="term" value="C:plasma membrane"/>
    <property type="evidence" value="ECO:0007669"/>
    <property type="project" value="UniProtKB-SubCell"/>
</dbReference>
<dbReference type="GO" id="GO:0015035">
    <property type="term" value="F:protein-disulfide reductase activity"/>
    <property type="evidence" value="ECO:0007669"/>
    <property type="project" value="UniProtKB-UniRule"/>
</dbReference>
<dbReference type="GO" id="GO:0006457">
    <property type="term" value="P:protein folding"/>
    <property type="evidence" value="ECO:0007669"/>
    <property type="project" value="InterPro"/>
</dbReference>
<dbReference type="Gene3D" id="1.20.1550.10">
    <property type="entry name" value="DsbB-like"/>
    <property type="match status" value="1"/>
</dbReference>
<dbReference type="HAMAP" id="MF_01311">
    <property type="entry name" value="DsbI"/>
    <property type="match status" value="1"/>
</dbReference>
<dbReference type="InterPro" id="IPR003752">
    <property type="entry name" value="DiS_bond_form_DsbB/BdbC"/>
</dbReference>
<dbReference type="InterPro" id="IPR023792">
    <property type="entry name" value="DiS_OxRdtase_Dsbl"/>
</dbReference>
<dbReference type="InterPro" id="IPR050183">
    <property type="entry name" value="DsbB"/>
</dbReference>
<dbReference type="InterPro" id="IPR023380">
    <property type="entry name" value="DsbB-like_sf"/>
</dbReference>
<dbReference type="NCBIfam" id="NF003304">
    <property type="entry name" value="PRK04307.1"/>
    <property type="match status" value="1"/>
</dbReference>
<dbReference type="PANTHER" id="PTHR36570">
    <property type="entry name" value="DISULFIDE BOND FORMATION PROTEIN B"/>
    <property type="match status" value="1"/>
</dbReference>
<dbReference type="PANTHER" id="PTHR36570:SF1">
    <property type="entry name" value="PROTEIN-DISULFIDE OXIDOREDUCTASE DSBI"/>
    <property type="match status" value="1"/>
</dbReference>
<dbReference type="Pfam" id="PF02600">
    <property type="entry name" value="DsbB"/>
    <property type="match status" value="1"/>
</dbReference>
<dbReference type="SUPFAM" id="SSF158442">
    <property type="entry name" value="DsbB-like"/>
    <property type="match status" value="1"/>
</dbReference>
<comment type="function">
    <text evidence="1">Required for disulfide bond formation in some proteins. Part of a redox system composed of DsbI and DsbL that mediates formation of an essential disulfide bond in AssT.</text>
</comment>
<comment type="subunit">
    <text evidence="1">Interacts with DsbL.</text>
</comment>
<comment type="subcellular location">
    <subcellularLocation>
        <location evidence="1">Cell inner membrane</location>
        <topology evidence="1">Multi-pass membrane protein</topology>
    </subcellularLocation>
</comment>
<comment type="similarity">
    <text evidence="1">Belongs to the DsbB family. DsbI subfamily.</text>
</comment>
<comment type="sequence caution" evidence="2">
    <conflict type="erroneous initiation">
        <sequence resource="EMBL-CDS" id="ABG71115"/>
    </conflict>
</comment>
<name>DSBI_ECOL5</name>
<organism>
    <name type="scientific">Escherichia coli O6:K15:H31 (strain 536 / UPEC)</name>
    <dbReference type="NCBI Taxonomy" id="362663"/>
    <lineage>
        <taxon>Bacteria</taxon>
        <taxon>Pseudomonadati</taxon>
        <taxon>Pseudomonadota</taxon>
        <taxon>Gammaproteobacteria</taxon>
        <taxon>Enterobacterales</taxon>
        <taxon>Enterobacteriaceae</taxon>
        <taxon>Escherichia</taxon>
    </lineage>
</organism>
<accession>Q0TD64</accession>
<reference key="1">
    <citation type="journal article" date="2006" name="Mol. Microbiol.">
        <title>Role of pathogenicity island-associated integrases in the genome plasticity of uropathogenic Escherichia coli strain 536.</title>
        <authorList>
            <person name="Hochhut B."/>
            <person name="Wilde C."/>
            <person name="Balling G."/>
            <person name="Middendorf B."/>
            <person name="Dobrindt U."/>
            <person name="Brzuszkiewicz E."/>
            <person name="Gottschalk G."/>
            <person name="Carniel E."/>
            <person name="Hacker J."/>
        </authorList>
    </citation>
    <scope>NUCLEOTIDE SEQUENCE [LARGE SCALE GENOMIC DNA]</scope>
    <source>
        <strain>536 / UPEC</strain>
    </source>
</reference>
<evidence type="ECO:0000255" key="1">
    <source>
        <dbReference type="HAMAP-Rule" id="MF_01311"/>
    </source>
</evidence>
<evidence type="ECO:0000305" key="2"/>
<keyword id="KW-0997">Cell inner membrane</keyword>
<keyword id="KW-1003">Cell membrane</keyword>
<keyword id="KW-1015">Disulfide bond</keyword>
<keyword id="KW-0249">Electron transport</keyword>
<keyword id="KW-0472">Membrane</keyword>
<keyword id="KW-0560">Oxidoreductase</keyword>
<keyword id="KW-0676">Redox-active center</keyword>
<keyword id="KW-0812">Transmembrane</keyword>
<keyword id="KW-1133">Transmembrane helix</keyword>
<keyword id="KW-0813">Transport</keyword>